<keyword id="KW-0479">Metal-binding</keyword>
<keyword id="KW-1185">Reference proteome</keyword>
<keyword id="KW-0862">Zinc</keyword>
<keyword id="KW-0863">Zinc-finger</keyword>
<protein>
    <recommendedName>
        <fullName>Gene 58 protein</fullName>
    </recommendedName>
    <alternativeName>
        <fullName>Gp58</fullName>
    </alternativeName>
</protein>
<organismHost>
    <name type="scientific">Mycobacterium</name>
    <dbReference type="NCBI Taxonomy" id="1763"/>
</organismHost>
<feature type="chain" id="PRO_0000164790" description="Gene 58 protein">
    <location>
        <begin position="1"/>
        <end position="129"/>
    </location>
</feature>
<feature type="region of interest" description="Disordered" evidence="1">
    <location>
        <begin position="87"/>
        <end position="129"/>
    </location>
</feature>
<feature type="compositionally biased region" description="Low complexity" evidence="1">
    <location>
        <begin position="106"/>
        <end position="115"/>
    </location>
</feature>
<proteinExistence type="predicted"/>
<organism>
    <name type="scientific">Mycobacterium phage D29</name>
    <name type="common">Mycobacteriophage D29</name>
    <dbReference type="NCBI Taxonomy" id="28369"/>
    <lineage>
        <taxon>Viruses</taxon>
        <taxon>Duplodnaviria</taxon>
        <taxon>Heunggongvirae</taxon>
        <taxon>Uroviricota</taxon>
        <taxon>Caudoviricetes</taxon>
        <taxon>Fromanvirus</taxon>
    </lineage>
</organism>
<sequence>MTATGIAEVIQRYYPDWDPPPDHYEWNKCLCPFHGDETPSAAVSYDLQGFNCLACGVRGDVISIIRHEEEVSFAEAVRIAEGLSVGGNIPVQRKPARKPSRRVFGESRSSGSSGSTVRPGIRGRSTPWS</sequence>
<dbReference type="EMBL" id="AF022214">
    <property type="protein sequence ID" value="AAC18499.1"/>
    <property type="molecule type" value="Genomic_DNA"/>
</dbReference>
<dbReference type="PIR" id="H72806">
    <property type="entry name" value="H72806"/>
</dbReference>
<dbReference type="RefSeq" id="NP_046874.1">
    <property type="nucleotide sequence ID" value="NC_001900.1"/>
</dbReference>
<dbReference type="SMR" id="O64249"/>
<dbReference type="GeneID" id="1261613"/>
<dbReference type="KEGG" id="vg:1261613"/>
<dbReference type="OrthoDB" id="20134at10239"/>
<dbReference type="Proteomes" id="UP000002131">
    <property type="component" value="Segment"/>
</dbReference>
<dbReference type="GO" id="GO:0003677">
    <property type="term" value="F:DNA binding"/>
    <property type="evidence" value="ECO:0007669"/>
    <property type="project" value="InterPro"/>
</dbReference>
<dbReference type="GO" id="GO:0003899">
    <property type="term" value="F:DNA-directed RNA polymerase activity"/>
    <property type="evidence" value="ECO:0007669"/>
    <property type="project" value="InterPro"/>
</dbReference>
<dbReference type="GO" id="GO:0008270">
    <property type="term" value="F:zinc ion binding"/>
    <property type="evidence" value="ECO:0007669"/>
    <property type="project" value="UniProtKB-KW"/>
</dbReference>
<dbReference type="GO" id="GO:0006269">
    <property type="term" value="P:DNA replication, synthesis of primer"/>
    <property type="evidence" value="ECO:0007669"/>
    <property type="project" value="TreeGrafter"/>
</dbReference>
<dbReference type="Gene3D" id="3.90.580.10">
    <property type="entry name" value="Zinc finger, CHC2-type domain"/>
    <property type="match status" value="1"/>
</dbReference>
<dbReference type="InterPro" id="IPR036977">
    <property type="entry name" value="DNA_primase_Znf_CHC2"/>
</dbReference>
<dbReference type="InterPro" id="IPR050219">
    <property type="entry name" value="DnaG_primase"/>
</dbReference>
<dbReference type="InterPro" id="IPR002694">
    <property type="entry name" value="Znf_CHC2"/>
</dbReference>
<dbReference type="PANTHER" id="PTHR30313">
    <property type="entry name" value="DNA PRIMASE"/>
    <property type="match status" value="1"/>
</dbReference>
<dbReference type="PANTHER" id="PTHR30313:SF2">
    <property type="entry name" value="DNA PRIMASE"/>
    <property type="match status" value="1"/>
</dbReference>
<dbReference type="Pfam" id="PF01807">
    <property type="entry name" value="Zn_ribbon_DnaG"/>
    <property type="match status" value="1"/>
</dbReference>
<dbReference type="SMART" id="SM00400">
    <property type="entry name" value="ZnF_CHCC"/>
    <property type="match status" value="1"/>
</dbReference>
<dbReference type="SUPFAM" id="SSF57783">
    <property type="entry name" value="Zinc beta-ribbon"/>
    <property type="match status" value="1"/>
</dbReference>
<reference key="1">
    <citation type="journal article" date="1998" name="J. Mol. Biol.">
        <title>Genome structure of mycobacteriophage D29: implications for phage evolution.</title>
        <authorList>
            <person name="Ford M.E."/>
            <person name="Sarkis G.J."/>
            <person name="Belanger A.E."/>
            <person name="Hendrix R.W."/>
            <person name="Hatfull G.F."/>
        </authorList>
    </citation>
    <scope>NUCLEOTIDE SEQUENCE [LARGE SCALE GENOMIC DNA]</scope>
</reference>
<accession>O64249</accession>
<name>VG58_BPMD2</name>
<gene>
    <name type="primary">58</name>
</gene>
<evidence type="ECO:0000256" key="1">
    <source>
        <dbReference type="SAM" id="MobiDB-lite"/>
    </source>
</evidence>